<dbReference type="EC" id="7.1.1.-" evidence="1"/>
<dbReference type="EMBL" id="CP000440">
    <property type="protein sequence ID" value="ABI87841.1"/>
    <property type="molecule type" value="Genomic_DNA"/>
</dbReference>
<dbReference type="RefSeq" id="WP_011657483.1">
    <property type="nucleotide sequence ID" value="NC_008390.1"/>
</dbReference>
<dbReference type="SMR" id="Q0BDD2"/>
<dbReference type="GeneID" id="93085507"/>
<dbReference type="KEGG" id="bam:Bamb_2285"/>
<dbReference type="PATRIC" id="fig|339670.21.peg.2642"/>
<dbReference type="eggNOG" id="COG0852">
    <property type="taxonomic scope" value="Bacteria"/>
</dbReference>
<dbReference type="Proteomes" id="UP000000662">
    <property type="component" value="Chromosome 1"/>
</dbReference>
<dbReference type="GO" id="GO:0005886">
    <property type="term" value="C:plasma membrane"/>
    <property type="evidence" value="ECO:0007669"/>
    <property type="project" value="UniProtKB-SubCell"/>
</dbReference>
<dbReference type="GO" id="GO:0008137">
    <property type="term" value="F:NADH dehydrogenase (ubiquinone) activity"/>
    <property type="evidence" value="ECO:0007669"/>
    <property type="project" value="InterPro"/>
</dbReference>
<dbReference type="GO" id="GO:0050136">
    <property type="term" value="F:NADH:ubiquinone reductase (non-electrogenic) activity"/>
    <property type="evidence" value="ECO:0007669"/>
    <property type="project" value="UniProtKB-UniRule"/>
</dbReference>
<dbReference type="GO" id="GO:0048038">
    <property type="term" value="F:quinone binding"/>
    <property type="evidence" value="ECO:0007669"/>
    <property type="project" value="UniProtKB-KW"/>
</dbReference>
<dbReference type="Gene3D" id="3.30.460.80">
    <property type="entry name" value="NADH:ubiquinone oxidoreductase, 30kDa subunit"/>
    <property type="match status" value="1"/>
</dbReference>
<dbReference type="HAMAP" id="MF_01357">
    <property type="entry name" value="NDH1_NuoC"/>
    <property type="match status" value="1"/>
</dbReference>
<dbReference type="InterPro" id="IPR010218">
    <property type="entry name" value="NADH_DH_suC"/>
</dbReference>
<dbReference type="InterPro" id="IPR037232">
    <property type="entry name" value="NADH_quin_OxRdtase_su_C/D-like"/>
</dbReference>
<dbReference type="InterPro" id="IPR001268">
    <property type="entry name" value="NADH_UbQ_OxRdtase_30kDa_su"/>
</dbReference>
<dbReference type="InterPro" id="IPR020396">
    <property type="entry name" value="NADH_UbQ_OxRdtase_CS"/>
</dbReference>
<dbReference type="NCBIfam" id="TIGR01961">
    <property type="entry name" value="NuoC_fam"/>
    <property type="match status" value="1"/>
</dbReference>
<dbReference type="NCBIfam" id="NF004730">
    <property type="entry name" value="PRK06074.1-1"/>
    <property type="match status" value="1"/>
</dbReference>
<dbReference type="PANTHER" id="PTHR10884:SF14">
    <property type="entry name" value="NADH DEHYDROGENASE [UBIQUINONE] IRON-SULFUR PROTEIN 3, MITOCHONDRIAL"/>
    <property type="match status" value="1"/>
</dbReference>
<dbReference type="PANTHER" id="PTHR10884">
    <property type="entry name" value="NADH DEHYDROGENASE UBIQUINONE IRON-SULFUR PROTEIN 3"/>
    <property type="match status" value="1"/>
</dbReference>
<dbReference type="Pfam" id="PF00329">
    <property type="entry name" value="Complex1_30kDa"/>
    <property type="match status" value="1"/>
</dbReference>
<dbReference type="SUPFAM" id="SSF143243">
    <property type="entry name" value="Nqo5-like"/>
    <property type="match status" value="1"/>
</dbReference>
<dbReference type="PROSITE" id="PS00542">
    <property type="entry name" value="COMPLEX1_30K"/>
    <property type="match status" value="1"/>
</dbReference>
<gene>
    <name evidence="1" type="primary">nuoC</name>
    <name type="ordered locus">Bamb_2285</name>
</gene>
<name>NUOC_BURCM</name>
<proteinExistence type="inferred from homology"/>
<reference key="1">
    <citation type="submission" date="2006-08" db="EMBL/GenBank/DDBJ databases">
        <title>Complete sequence of chromosome 1 of Burkholderia cepacia AMMD.</title>
        <authorList>
            <person name="Copeland A."/>
            <person name="Lucas S."/>
            <person name="Lapidus A."/>
            <person name="Barry K."/>
            <person name="Detter J.C."/>
            <person name="Glavina del Rio T."/>
            <person name="Hammon N."/>
            <person name="Israni S."/>
            <person name="Pitluck S."/>
            <person name="Bruce D."/>
            <person name="Chain P."/>
            <person name="Malfatti S."/>
            <person name="Shin M."/>
            <person name="Vergez L."/>
            <person name="Schmutz J."/>
            <person name="Larimer F."/>
            <person name="Land M."/>
            <person name="Hauser L."/>
            <person name="Kyrpides N."/>
            <person name="Kim E."/>
            <person name="Parke J."/>
            <person name="Coenye T."/>
            <person name="Konstantinidis K."/>
            <person name="Ramette A."/>
            <person name="Tiedje J."/>
            <person name="Richardson P."/>
        </authorList>
    </citation>
    <scope>NUCLEOTIDE SEQUENCE [LARGE SCALE GENOMIC DNA]</scope>
    <source>
        <strain>ATCC BAA-244 / DSM 16087 / CCUG 44356 / LMG 19182 / AMMD</strain>
    </source>
</reference>
<protein>
    <recommendedName>
        <fullName evidence="1">NADH-quinone oxidoreductase subunit C</fullName>
        <ecNumber evidence="1">7.1.1.-</ecNumber>
    </recommendedName>
    <alternativeName>
        <fullName evidence="1">NADH dehydrogenase I subunit C</fullName>
    </alternativeName>
    <alternativeName>
        <fullName evidence="1">NDH-1 subunit C</fullName>
    </alternativeName>
</protein>
<comment type="function">
    <text evidence="1">NDH-1 shuttles electrons from NADH, via FMN and iron-sulfur (Fe-S) centers, to quinones in the respiratory chain. The immediate electron acceptor for the enzyme in this species is believed to be ubiquinone. Couples the redox reaction to proton translocation (for every two electrons transferred, four hydrogen ions are translocated across the cytoplasmic membrane), and thus conserves the redox energy in a proton gradient.</text>
</comment>
<comment type="catalytic activity">
    <reaction evidence="1">
        <text>a quinone + NADH + 5 H(+)(in) = a quinol + NAD(+) + 4 H(+)(out)</text>
        <dbReference type="Rhea" id="RHEA:57888"/>
        <dbReference type="ChEBI" id="CHEBI:15378"/>
        <dbReference type="ChEBI" id="CHEBI:24646"/>
        <dbReference type="ChEBI" id="CHEBI:57540"/>
        <dbReference type="ChEBI" id="CHEBI:57945"/>
        <dbReference type="ChEBI" id="CHEBI:132124"/>
    </reaction>
</comment>
<comment type="subunit">
    <text evidence="1">NDH-1 is composed of 14 different subunits. Subunits NuoB, C, D, E, F, and G constitute the peripheral sector of the complex.</text>
</comment>
<comment type="subcellular location">
    <subcellularLocation>
        <location evidence="1">Cell inner membrane</location>
        <topology evidence="1">Peripheral membrane protein</topology>
        <orientation evidence="1">Cytoplasmic side</orientation>
    </subcellularLocation>
</comment>
<comment type="similarity">
    <text evidence="1">Belongs to the complex I 30 kDa subunit family.</text>
</comment>
<organism>
    <name type="scientific">Burkholderia ambifaria (strain ATCC BAA-244 / DSM 16087 / CCUG 44356 / LMG 19182 / AMMD)</name>
    <name type="common">Burkholderia cepacia (strain AMMD)</name>
    <dbReference type="NCBI Taxonomy" id="339670"/>
    <lineage>
        <taxon>Bacteria</taxon>
        <taxon>Pseudomonadati</taxon>
        <taxon>Pseudomonadota</taxon>
        <taxon>Betaproteobacteria</taxon>
        <taxon>Burkholderiales</taxon>
        <taxon>Burkholderiaceae</taxon>
        <taxon>Burkholderia</taxon>
        <taxon>Burkholderia cepacia complex</taxon>
    </lineage>
</organism>
<feature type="chain" id="PRO_0000358058" description="NADH-quinone oxidoreductase subunit C">
    <location>
        <begin position="1"/>
        <end position="200"/>
    </location>
</feature>
<accession>Q0BDD2</accession>
<keyword id="KW-0997">Cell inner membrane</keyword>
<keyword id="KW-1003">Cell membrane</keyword>
<keyword id="KW-0472">Membrane</keyword>
<keyword id="KW-0520">NAD</keyword>
<keyword id="KW-0874">Quinone</keyword>
<keyword id="KW-1278">Translocase</keyword>
<keyword id="KW-0813">Transport</keyword>
<keyword id="KW-0830">Ubiquinone</keyword>
<sequence length="200" mass="22817">MASKIEILKANLEAALGARVVSLTEAIGELTLVVKASDYLEVAKTLRDDPKLCFEQLIDLCGVDYQTYGDGAYDGPRFAAVSQLLSVTNNWRLRLRVFAPDDDLPIVASLVDIWTSANWYEREAFDLYGLVFEGHPDLRRILTDYGFIGHPFRKDFPVSGYVEMRYDPEEKRVVYQPVTIEPREITPRVIREDRYGGLKH</sequence>
<evidence type="ECO:0000255" key="1">
    <source>
        <dbReference type="HAMAP-Rule" id="MF_01357"/>
    </source>
</evidence>